<reference key="1">
    <citation type="submission" date="2004-11" db="EMBL/GenBank/DDBJ databases">
        <authorList>
            <consortium name="The German cDNA consortium"/>
        </authorList>
    </citation>
    <scope>NUCLEOTIDE SEQUENCE [LARGE SCALE MRNA]</scope>
    <source>
        <tissue>Brain cortex</tissue>
    </source>
</reference>
<organism>
    <name type="scientific">Pongo abelii</name>
    <name type="common">Sumatran orangutan</name>
    <name type="synonym">Pongo pygmaeus abelii</name>
    <dbReference type="NCBI Taxonomy" id="9601"/>
    <lineage>
        <taxon>Eukaryota</taxon>
        <taxon>Metazoa</taxon>
        <taxon>Chordata</taxon>
        <taxon>Craniata</taxon>
        <taxon>Vertebrata</taxon>
        <taxon>Euteleostomi</taxon>
        <taxon>Mammalia</taxon>
        <taxon>Eutheria</taxon>
        <taxon>Euarchontoglires</taxon>
        <taxon>Primates</taxon>
        <taxon>Haplorrhini</taxon>
        <taxon>Catarrhini</taxon>
        <taxon>Hominidae</taxon>
        <taxon>Pongo</taxon>
    </lineage>
</organism>
<proteinExistence type="evidence at transcript level"/>
<sequence length="419" mass="47262">MVSESHHEALAAPPVTTVATVLPSNATEPASPGEGKEDAFSKLKEKFMNELHKIPLPPWALIAIAIVAVLLVLTCCFCICKKCLFKKKNKKKGKEKGGKNAINMKDVKDLGKTMKDQDDDAETGLTDGEEKEEPKEEEKLGKLQYSLDYDFQNNQLLVGIIQAAELPALDMGGTSDPYVKVFLLPDKKKKFETKVHRKTLNPVFNEQFTFKVPYSELGGKTLVMAVYDFDRFSKHDIIGEFKVPMNTVDFGHVTEEWRDLQSAEKEEQEKLGDICFSLRYVPTAGKLTVVILEAKNLKKMDVGGLSDPYVKIHLMQNGKRLKKKETTIKKNTLNPYYNESFSFEVPFEQIQKVQVVVTVLDYDKIGKNDAIGKVFVGYNSTGAELRHWSDMLANPRRPIAQWHTLQVEEEVDAMLAVKK</sequence>
<name>SYT1_PONAB</name>
<feature type="chain" id="PRO_0000183939" description="Synaptotagmin-1">
    <location>
        <begin position="1"/>
        <end position="419"/>
    </location>
</feature>
<feature type="topological domain" description="Vesicular" evidence="6">
    <location>
        <begin position="1"/>
        <end position="58"/>
    </location>
</feature>
<feature type="transmembrane region" description="Helical" evidence="6">
    <location>
        <begin position="59"/>
        <end position="80"/>
    </location>
</feature>
<feature type="topological domain" description="Cytoplasmic" evidence="6">
    <location>
        <begin position="81"/>
        <end position="419"/>
    </location>
</feature>
<feature type="domain" description="C2 1" evidence="7">
    <location>
        <begin position="139"/>
        <end position="258"/>
    </location>
</feature>
<feature type="domain" description="C2 2" evidence="7">
    <location>
        <begin position="270"/>
        <end position="403"/>
    </location>
</feature>
<feature type="region of interest" description="Disordered" evidence="8">
    <location>
        <begin position="108"/>
        <end position="139"/>
    </location>
</feature>
<feature type="region of interest" description="Phospholipid binding" evidence="1">
    <location>
        <begin position="133"/>
        <end position="379"/>
    </location>
</feature>
<feature type="compositionally biased region" description="Acidic residues" evidence="8">
    <location>
        <begin position="117"/>
        <end position="131"/>
    </location>
</feature>
<feature type="binding site" evidence="7">
    <location>
        <position position="169"/>
    </location>
    <ligand>
        <name>Ca(2+)</name>
        <dbReference type="ChEBI" id="CHEBI:29108"/>
        <label>2</label>
    </ligand>
</feature>
<feature type="binding site" evidence="7">
    <location>
        <position position="170"/>
    </location>
    <ligand>
        <name>Ca(2+)</name>
        <dbReference type="ChEBI" id="CHEBI:29108"/>
        <label>1</label>
    </ligand>
</feature>
<feature type="binding site" evidence="7">
    <location>
        <position position="170"/>
    </location>
    <ligand>
        <name>Ca(2+)</name>
        <dbReference type="ChEBI" id="CHEBI:29108"/>
        <label>2</label>
    </ligand>
</feature>
<feature type="binding site" evidence="7">
    <location>
        <position position="176"/>
    </location>
    <ligand>
        <name>Ca(2+)</name>
        <dbReference type="ChEBI" id="CHEBI:29108"/>
        <label>1</label>
    </ligand>
</feature>
<feature type="binding site" evidence="7">
    <location>
        <position position="228"/>
    </location>
    <ligand>
        <name>Ca(2+)</name>
        <dbReference type="ChEBI" id="CHEBI:29108"/>
        <label>1</label>
    </ligand>
</feature>
<feature type="binding site" evidence="7">
    <location>
        <position position="228"/>
    </location>
    <ligand>
        <name>Ca(2+)</name>
        <dbReference type="ChEBI" id="CHEBI:29108"/>
        <label>2</label>
    </ligand>
</feature>
<feature type="binding site" evidence="7">
    <location>
        <position position="229"/>
    </location>
    <ligand>
        <name>Ca(2+)</name>
        <dbReference type="ChEBI" id="CHEBI:29108"/>
        <label>1</label>
    </ligand>
</feature>
<feature type="binding site" evidence="7">
    <location>
        <position position="230"/>
    </location>
    <ligand>
        <name>Ca(2+)</name>
        <dbReference type="ChEBI" id="CHEBI:29108"/>
        <label>1</label>
    </ligand>
</feature>
<feature type="binding site" evidence="7">
    <location>
        <position position="230"/>
    </location>
    <ligand>
        <name>Ca(2+)</name>
        <dbReference type="ChEBI" id="CHEBI:29108"/>
        <label>2</label>
    </ligand>
</feature>
<feature type="binding site" evidence="7">
    <location>
        <position position="230"/>
    </location>
    <ligand>
        <name>Ca(2+)</name>
        <dbReference type="ChEBI" id="CHEBI:29108"/>
        <label>3</label>
    </ligand>
</feature>
<feature type="binding site" evidence="7">
    <location>
        <position position="233"/>
    </location>
    <ligand>
        <name>Ca(2+)</name>
        <dbReference type="ChEBI" id="CHEBI:29108"/>
        <label>3</label>
    </ligand>
</feature>
<feature type="binding site" evidence="7">
    <location>
        <position position="234"/>
    </location>
    <ligand>
        <name>Ca(2+)</name>
        <dbReference type="ChEBI" id="CHEBI:29108"/>
        <label>3</label>
    </ligand>
</feature>
<feature type="binding site" evidence="7">
    <location>
        <position position="236"/>
    </location>
    <ligand>
        <name>Ca(2+)</name>
        <dbReference type="ChEBI" id="CHEBI:29108"/>
        <label>2</label>
    </ligand>
</feature>
<feature type="binding site" evidence="7">
    <location>
        <position position="236"/>
    </location>
    <ligand>
        <name>Ca(2+)</name>
        <dbReference type="ChEBI" id="CHEBI:29108"/>
        <label>3</label>
    </ligand>
</feature>
<feature type="binding site" evidence="7">
    <location>
        <position position="301"/>
    </location>
    <ligand>
        <name>Ca(2+)</name>
        <dbReference type="ChEBI" id="CHEBI:29108"/>
        <label>4</label>
    </ligand>
</feature>
<feature type="binding site" evidence="7">
    <location>
        <position position="301"/>
    </location>
    <ligand>
        <name>Ca(2+)</name>
        <dbReference type="ChEBI" id="CHEBI:29108"/>
        <label>5</label>
    </ligand>
</feature>
<feature type="binding site" evidence="7">
    <location>
        <position position="307"/>
    </location>
    <ligand>
        <name>Ca(2+)</name>
        <dbReference type="ChEBI" id="CHEBI:29108"/>
        <label>4</label>
    </ligand>
</feature>
<feature type="binding site" evidence="7">
    <location>
        <position position="361"/>
    </location>
    <ligand>
        <name>Ca(2+)</name>
        <dbReference type="ChEBI" id="CHEBI:29108"/>
        <label>4</label>
    </ligand>
</feature>
<feature type="binding site" evidence="7">
    <location>
        <position position="361"/>
    </location>
    <ligand>
        <name>Ca(2+)</name>
        <dbReference type="ChEBI" id="CHEBI:29108"/>
        <label>5</label>
    </ligand>
</feature>
<feature type="binding site" evidence="7">
    <location>
        <position position="363"/>
    </location>
    <ligand>
        <name>Ca(2+)</name>
        <dbReference type="ChEBI" id="CHEBI:29108"/>
        <label>4</label>
    </ligand>
</feature>
<feature type="binding site" evidence="7">
    <location>
        <position position="363"/>
    </location>
    <ligand>
        <name>Ca(2+)</name>
        <dbReference type="ChEBI" id="CHEBI:29108"/>
        <label>5</label>
    </ligand>
</feature>
<feature type="binding site" evidence="7">
    <location>
        <position position="369"/>
    </location>
    <ligand>
        <name>Ca(2+)</name>
        <dbReference type="ChEBI" id="CHEBI:29108"/>
        <label>5</label>
    </ligand>
</feature>
<feature type="modified residue" description="Phosphothreonine" evidence="2">
    <location>
        <position position="126"/>
    </location>
</feature>
<feature type="modified residue" description="Phosphotyrosine" evidence="4">
    <location>
        <position position="227"/>
    </location>
</feature>
<feature type="modified residue" description="Phosphoserine" evidence="4">
    <location>
        <position position="262"/>
    </location>
</feature>
<feature type="modified residue" description="Phosphoserine" evidence="3">
    <location>
        <position position="340"/>
    </location>
</feature>
<feature type="modified residue" description="Phosphoserine" evidence="3">
    <location>
        <position position="342"/>
    </location>
</feature>
<feature type="lipid moiety-binding region" description="S-palmitoyl cysteine" evidence="3">
    <location>
        <position position="75"/>
    </location>
</feature>
<feature type="lipid moiety-binding region" description="S-palmitoyl cysteine" evidence="3">
    <location>
        <position position="76"/>
    </location>
</feature>
<feature type="lipid moiety-binding region" description="S-palmitoyl cysteine" evidence="3">
    <location>
        <position position="78"/>
    </location>
</feature>
<feature type="lipid moiety-binding region" description="S-palmitoyl cysteine" evidence="3">
    <location>
        <position position="80"/>
    </location>
</feature>
<feature type="lipid moiety-binding region" description="S-palmitoyl cysteine" evidence="3">
    <location>
        <position position="83"/>
    </location>
</feature>
<feature type="glycosylation site" description="N-linked (GlcNAc...) asparagine" evidence="6">
    <location>
        <position position="25"/>
    </location>
</feature>
<protein>
    <recommendedName>
        <fullName evidence="3">Synaptotagmin-1</fullName>
    </recommendedName>
    <alternativeName>
        <fullName evidence="3">Synaptotagmin I</fullName>
        <shortName>SytI</shortName>
    </alternativeName>
</protein>
<accession>Q5R4J5</accession>
<evidence type="ECO:0000250" key="1"/>
<evidence type="ECO:0000250" key="2">
    <source>
        <dbReference type="UniProtKB" id="P21579"/>
    </source>
</evidence>
<evidence type="ECO:0000250" key="3">
    <source>
        <dbReference type="UniProtKB" id="P21707"/>
    </source>
</evidence>
<evidence type="ECO:0000250" key="4">
    <source>
        <dbReference type="UniProtKB" id="P46096"/>
    </source>
</evidence>
<evidence type="ECO:0000250" key="5">
    <source>
        <dbReference type="UniProtKB" id="P48018"/>
    </source>
</evidence>
<evidence type="ECO:0000255" key="6"/>
<evidence type="ECO:0000255" key="7">
    <source>
        <dbReference type="PROSITE-ProRule" id="PRU00041"/>
    </source>
</evidence>
<evidence type="ECO:0000256" key="8">
    <source>
        <dbReference type="SAM" id="MobiDB-lite"/>
    </source>
</evidence>
<evidence type="ECO:0000305" key="9"/>
<gene>
    <name evidence="2" type="primary">SYT1</name>
</gene>
<keyword id="KW-0106">Calcium</keyword>
<keyword id="KW-0963">Cytoplasm</keyword>
<keyword id="KW-0968">Cytoplasmic vesicle</keyword>
<keyword id="KW-0221">Differentiation</keyword>
<keyword id="KW-0325">Glycoprotein</keyword>
<keyword id="KW-0449">Lipoprotein</keyword>
<keyword id="KW-0472">Membrane</keyword>
<keyword id="KW-0479">Metal-binding</keyword>
<keyword id="KW-0564">Palmitate</keyword>
<keyword id="KW-0597">Phosphoprotein</keyword>
<keyword id="KW-1185">Reference proteome</keyword>
<keyword id="KW-0677">Repeat</keyword>
<keyword id="KW-0770">Synapse</keyword>
<keyword id="KW-0812">Transmembrane</keyword>
<keyword id="KW-1133">Transmembrane helix</keyword>
<comment type="function">
    <text evidence="2 4">Calcium sensor that participates in triggering neurotransmitter release at the synapse (By similarity). May have a regulatory role in the membrane interactions during trafficking of synaptic vesicles at the active zone of the synapse (By similarity). It binds acidic phospholipids with a specificity that requires the presence of both an acidic head group and a diacyl backbone. A Ca(2+)-dependent interaction between synaptotagmin and putative receptors for activated protein kinase C has also been reported. It can bind to at least three additional proteins in a Ca(2+)-independent manner; these are neurexins, syntaxin and AP2. Plays a role in dendrite formation by melanocytes (By similarity).</text>
</comment>
<comment type="cofactor">
    <cofactor evidence="7">
        <name>Ca(2+)</name>
        <dbReference type="ChEBI" id="CHEBI:29108"/>
    </cofactor>
    <text evidence="3">Binds 3 Ca(2+) ions per subunit. The ions are bound to the C2 domains.</text>
</comment>
<comment type="subunit">
    <text evidence="2 3 4 5 9">Homotetramer (Probable). Heterodimer; heterodimerizes with SYT2 in presence of calcium (By similarity). Interacts with SCAMP5 (By similarity). Interacts with STON2 (By similarity). Forms a complex with SV2B, syntaxin 1 and SNAP25 (By similarity). Interacts with SV2A, SV2B and SV2C (By similarity). Interacts with RIMS1 (By similarity). Interacts with PRRT2 (By similarity). Interacts with DNAJC5 in a phosphorylation-dependent manner (By similarity). Interacts (via N-terminus) with RAB3A (By similarity). Interacts with SYT12 (By similarity). Interacts with calmodulin (By similarity). Interacts with DNM1 (via C-terminal proline-rich domain (PRD)); this interaction facilitates vesicle fission during clathrin-mediated endocytosis (CME) (By similarity).</text>
</comment>
<comment type="subcellular location">
    <subcellularLocation>
        <location evidence="3">Cytoplasmic vesicle</location>
        <location evidence="3">Secretory vesicle membrane</location>
        <topology evidence="6">Single-pass membrane protein</topology>
    </subcellularLocation>
    <subcellularLocation>
        <location evidence="3">Cytoplasmic vesicle</location>
        <location evidence="3">Secretory vesicle</location>
        <location evidence="3">Synaptic vesicle membrane</location>
        <topology evidence="3">Single-pass membrane protein</topology>
    </subcellularLocation>
    <subcellularLocation>
        <location evidence="3">Cytoplasmic vesicle</location>
        <location evidence="3">Secretory vesicle</location>
        <location evidence="3">Chromaffin granule membrane</location>
        <topology evidence="3">Single-pass membrane protein</topology>
    </subcellularLocation>
    <subcellularLocation>
        <location evidence="3">Cytoplasm</location>
    </subcellularLocation>
</comment>
<comment type="domain">
    <text evidence="3">The first C2 domain mediates Ca(2+)-dependent phospholipid binding.</text>
</comment>
<comment type="domain">
    <text evidence="3">The second C2 domain mediates interaction with SV2A and probably with STN2.</text>
</comment>
<comment type="PTM">
    <text evidence="3">Glycosylated.</text>
</comment>
<comment type="similarity">
    <text evidence="9">Belongs to the synaptotagmin family.</text>
</comment>
<dbReference type="EMBL" id="CR861252">
    <property type="protein sequence ID" value="CAH93321.1"/>
    <property type="molecule type" value="mRNA"/>
</dbReference>
<dbReference type="RefSeq" id="NP_001128903.1">
    <property type="nucleotide sequence ID" value="NM_001135431.1"/>
</dbReference>
<dbReference type="SMR" id="Q5R4J5"/>
<dbReference type="FunCoup" id="Q5R4J5">
    <property type="interactions" value="1341"/>
</dbReference>
<dbReference type="STRING" id="9601.ENSPPYP00000005465"/>
<dbReference type="GlyCosmos" id="Q5R4J5">
    <property type="glycosylation" value="1 site, No reported glycans"/>
</dbReference>
<dbReference type="GeneID" id="100189845"/>
<dbReference type="KEGG" id="pon:100189845"/>
<dbReference type="CTD" id="6857"/>
<dbReference type="eggNOG" id="KOG1028">
    <property type="taxonomic scope" value="Eukaryota"/>
</dbReference>
<dbReference type="InParanoid" id="Q5R4J5"/>
<dbReference type="OrthoDB" id="67700at2759"/>
<dbReference type="Proteomes" id="UP000001595">
    <property type="component" value="Unplaced"/>
</dbReference>
<dbReference type="GO" id="GO:0030424">
    <property type="term" value="C:axon"/>
    <property type="evidence" value="ECO:0007669"/>
    <property type="project" value="TreeGrafter"/>
</dbReference>
<dbReference type="GO" id="GO:0042584">
    <property type="term" value="C:chromaffin granule membrane"/>
    <property type="evidence" value="ECO:0007669"/>
    <property type="project" value="UniProtKB-SubCell"/>
</dbReference>
<dbReference type="GO" id="GO:0031045">
    <property type="term" value="C:dense core granule"/>
    <property type="evidence" value="ECO:0007669"/>
    <property type="project" value="TreeGrafter"/>
</dbReference>
<dbReference type="GO" id="GO:0005886">
    <property type="term" value="C:plasma membrane"/>
    <property type="evidence" value="ECO:0007669"/>
    <property type="project" value="TreeGrafter"/>
</dbReference>
<dbReference type="GO" id="GO:0030672">
    <property type="term" value="C:synaptic vesicle membrane"/>
    <property type="evidence" value="ECO:0007669"/>
    <property type="project" value="UniProtKB-SubCell"/>
</dbReference>
<dbReference type="GO" id="GO:0005509">
    <property type="term" value="F:calcium ion binding"/>
    <property type="evidence" value="ECO:0007669"/>
    <property type="project" value="TreeGrafter"/>
</dbReference>
<dbReference type="GO" id="GO:0005544">
    <property type="term" value="F:calcium-dependent phospholipid binding"/>
    <property type="evidence" value="ECO:0007669"/>
    <property type="project" value="TreeGrafter"/>
</dbReference>
<dbReference type="GO" id="GO:0030276">
    <property type="term" value="F:clathrin binding"/>
    <property type="evidence" value="ECO:0007669"/>
    <property type="project" value="TreeGrafter"/>
</dbReference>
<dbReference type="GO" id="GO:0001786">
    <property type="term" value="F:phosphatidylserine binding"/>
    <property type="evidence" value="ECO:0007669"/>
    <property type="project" value="TreeGrafter"/>
</dbReference>
<dbReference type="GO" id="GO:0000149">
    <property type="term" value="F:SNARE binding"/>
    <property type="evidence" value="ECO:0007669"/>
    <property type="project" value="TreeGrafter"/>
</dbReference>
<dbReference type="GO" id="GO:0048791">
    <property type="term" value="P:calcium ion-regulated exocytosis of neurotransmitter"/>
    <property type="evidence" value="ECO:0007669"/>
    <property type="project" value="TreeGrafter"/>
</dbReference>
<dbReference type="GO" id="GO:0030154">
    <property type="term" value="P:cell differentiation"/>
    <property type="evidence" value="ECO:0007669"/>
    <property type="project" value="UniProtKB-KW"/>
</dbReference>
<dbReference type="GO" id="GO:1903235">
    <property type="term" value="P:positive regulation of calcium ion-dependent exocytosis of neurotransmitter"/>
    <property type="evidence" value="ECO:0000250"/>
    <property type="project" value="UniProtKB"/>
</dbReference>
<dbReference type="GO" id="GO:0048488">
    <property type="term" value="P:synaptic vesicle endocytosis"/>
    <property type="evidence" value="ECO:0007669"/>
    <property type="project" value="TreeGrafter"/>
</dbReference>
<dbReference type="CDD" id="cd08385">
    <property type="entry name" value="C2A_Synaptotagmin-1-5-6-9-10"/>
    <property type="match status" value="1"/>
</dbReference>
<dbReference type="CDD" id="cd08402">
    <property type="entry name" value="C2B_Synaptotagmin-1"/>
    <property type="match status" value="1"/>
</dbReference>
<dbReference type="CDD" id="cd21963">
    <property type="entry name" value="Syt1_N"/>
    <property type="match status" value="1"/>
</dbReference>
<dbReference type="FunFam" id="2.60.40.150:FF:000007">
    <property type="entry name" value="Synaptotagmin 1"/>
    <property type="match status" value="1"/>
</dbReference>
<dbReference type="FunFam" id="2.60.40.150:FF:000016">
    <property type="entry name" value="Synaptotagmin 1"/>
    <property type="match status" value="1"/>
</dbReference>
<dbReference type="Gene3D" id="2.60.40.150">
    <property type="entry name" value="C2 domain"/>
    <property type="match status" value="2"/>
</dbReference>
<dbReference type="InterPro" id="IPR000008">
    <property type="entry name" value="C2_dom"/>
</dbReference>
<dbReference type="InterPro" id="IPR035892">
    <property type="entry name" value="C2_domain_sf"/>
</dbReference>
<dbReference type="InterPro" id="IPR001565">
    <property type="entry name" value="Synaptotagmin"/>
</dbReference>
<dbReference type="PANTHER" id="PTHR10024">
    <property type="entry name" value="SYNAPTOTAGMIN"/>
    <property type="match status" value="1"/>
</dbReference>
<dbReference type="PANTHER" id="PTHR10024:SF239">
    <property type="entry name" value="SYNAPTOTAGMIN-1"/>
    <property type="match status" value="1"/>
</dbReference>
<dbReference type="Pfam" id="PF00168">
    <property type="entry name" value="C2"/>
    <property type="match status" value="2"/>
</dbReference>
<dbReference type="PRINTS" id="PR00360">
    <property type="entry name" value="C2DOMAIN"/>
</dbReference>
<dbReference type="PRINTS" id="PR00399">
    <property type="entry name" value="SYNAPTOTAGMN"/>
</dbReference>
<dbReference type="SMART" id="SM00239">
    <property type="entry name" value="C2"/>
    <property type="match status" value="2"/>
</dbReference>
<dbReference type="SUPFAM" id="SSF49562">
    <property type="entry name" value="C2 domain (Calcium/lipid-binding domain, CaLB)"/>
    <property type="match status" value="2"/>
</dbReference>
<dbReference type="PROSITE" id="PS50004">
    <property type="entry name" value="C2"/>
    <property type="match status" value="2"/>
</dbReference>